<comment type="function">
    <text evidence="1">Microtubule-binding protein required to ensure proper cell division and nuclear envelope reassembly by sequestering the endoplasmic reticulum away from chromosomes during mitosis. Probably acts by clearing the endoplasmic reticulum membrane from metaphase chromosomes (By similarity).</text>
</comment>
<comment type="subcellular location">
    <subcellularLocation>
        <location evidence="1">Endoplasmic reticulum membrane</location>
        <topology evidence="1">Multi-pass membrane protein</topology>
    </subcellularLocation>
</comment>
<comment type="similarity">
    <text evidence="5">Belongs to the DP1 family.</text>
</comment>
<reference key="1">
    <citation type="journal article" date="2004" name="Genome Res.">
        <title>The status, quality, and expansion of the NIH full-length cDNA project: the Mammalian Gene Collection (MGC).</title>
        <authorList>
            <consortium name="The MGC Project Team"/>
        </authorList>
    </citation>
    <scope>NUCLEOTIDE SEQUENCE [LARGE SCALE MRNA]</scope>
    <source>
        <tissue>Placenta</tissue>
    </source>
</reference>
<reference key="2">
    <citation type="journal article" date="2006" name="J. Proteome Res.">
        <title>Phosphoproteomic analysis of rat liver by high capacity IMAC and LC-MS/MS.</title>
        <authorList>
            <person name="Moser K."/>
            <person name="White F.M."/>
        </authorList>
    </citation>
    <scope>IDENTIFICATION BY MASS SPECTROMETRY [LARGE SCALE ANALYSIS]</scope>
</reference>
<reference key="3">
    <citation type="journal article" date="2012" name="Nat. Commun.">
        <title>Quantitative maps of protein phosphorylation sites across 14 different rat organs and tissues.</title>
        <authorList>
            <person name="Lundby A."/>
            <person name="Secher A."/>
            <person name="Lage K."/>
            <person name="Nordsborg N.B."/>
            <person name="Dmytriyev A."/>
            <person name="Lundby C."/>
            <person name="Olsen J.V."/>
        </authorList>
    </citation>
    <scope>PHOSPHORYLATION [LARGE SCALE ANALYSIS] AT SER-152</scope>
    <scope>IDENTIFICATION BY MASS SPECTROMETRY [LARGE SCALE ANALYSIS]</scope>
</reference>
<proteinExistence type="evidence at protein level"/>
<dbReference type="EMBL" id="BC097957">
    <property type="protein sequence ID" value="AAH97957.1"/>
    <property type="molecule type" value="mRNA"/>
</dbReference>
<dbReference type="RefSeq" id="NP_001020450.1">
    <property type="nucleotide sequence ID" value="NM_001025279.1"/>
</dbReference>
<dbReference type="FunCoup" id="Q4QQW1">
    <property type="interactions" value="502"/>
</dbReference>
<dbReference type="STRING" id="10116.ENSRNOP00000015169"/>
<dbReference type="iPTMnet" id="Q4QQW1"/>
<dbReference type="PhosphoSitePlus" id="Q4QQW1"/>
<dbReference type="jPOST" id="Q4QQW1"/>
<dbReference type="PaxDb" id="10116-ENSRNOP00000015169"/>
<dbReference type="Ensembl" id="ENSRNOT00000015169.7">
    <property type="protein sequence ID" value="ENSRNOP00000015169.4"/>
    <property type="gene ID" value="ENSRNOG00000011373.7"/>
</dbReference>
<dbReference type="GeneID" id="306014"/>
<dbReference type="KEGG" id="rno:306014"/>
<dbReference type="UCSC" id="RGD:1306561">
    <property type="organism name" value="rat"/>
</dbReference>
<dbReference type="AGR" id="RGD:1306561"/>
<dbReference type="CTD" id="80346"/>
<dbReference type="RGD" id="1306561">
    <property type="gene designation" value="Reep4"/>
</dbReference>
<dbReference type="eggNOG" id="KOG1726">
    <property type="taxonomic scope" value="Eukaryota"/>
</dbReference>
<dbReference type="GeneTree" id="ENSGT00940000161674"/>
<dbReference type="HOGENOM" id="CLU_028431_0_1_1"/>
<dbReference type="InParanoid" id="Q4QQW1"/>
<dbReference type="OMA" id="DTDDECW"/>
<dbReference type="OrthoDB" id="434647at2759"/>
<dbReference type="PhylomeDB" id="Q4QQW1"/>
<dbReference type="TreeFam" id="TF314177"/>
<dbReference type="PRO" id="PR:Q4QQW1"/>
<dbReference type="Proteomes" id="UP000002494">
    <property type="component" value="Chromosome 15"/>
</dbReference>
<dbReference type="Bgee" id="ENSRNOG00000011373">
    <property type="expression patterns" value="Expressed in colon and 20 other cell types or tissues"/>
</dbReference>
<dbReference type="GO" id="GO:0005881">
    <property type="term" value="C:cytoplasmic microtubule"/>
    <property type="evidence" value="ECO:0000318"/>
    <property type="project" value="GO_Central"/>
</dbReference>
<dbReference type="GO" id="GO:0005783">
    <property type="term" value="C:endoplasmic reticulum"/>
    <property type="evidence" value="ECO:0000250"/>
    <property type="project" value="UniProtKB"/>
</dbReference>
<dbReference type="GO" id="GO:0005789">
    <property type="term" value="C:endoplasmic reticulum membrane"/>
    <property type="evidence" value="ECO:0000318"/>
    <property type="project" value="GO_Central"/>
</dbReference>
<dbReference type="GO" id="GO:0071782">
    <property type="term" value="C:endoplasmic reticulum tubular network"/>
    <property type="evidence" value="ECO:0000318"/>
    <property type="project" value="GO_Central"/>
</dbReference>
<dbReference type="GO" id="GO:0008017">
    <property type="term" value="F:microtubule binding"/>
    <property type="evidence" value="ECO:0000250"/>
    <property type="project" value="UniProtKB"/>
</dbReference>
<dbReference type="GO" id="GO:0051301">
    <property type="term" value="P:cell division"/>
    <property type="evidence" value="ECO:0007669"/>
    <property type="project" value="UniProtKB-KW"/>
</dbReference>
<dbReference type="GO" id="GO:0071786">
    <property type="term" value="P:endoplasmic reticulum tubular network organization"/>
    <property type="evidence" value="ECO:0000318"/>
    <property type="project" value="GO_Central"/>
</dbReference>
<dbReference type="GO" id="GO:0007084">
    <property type="term" value="P:mitotic nuclear membrane reassembly"/>
    <property type="evidence" value="ECO:0000250"/>
    <property type="project" value="UniProtKB"/>
</dbReference>
<dbReference type="GO" id="GO:0006998">
    <property type="term" value="P:nuclear envelope organization"/>
    <property type="evidence" value="ECO:0000250"/>
    <property type="project" value="UniProtKB"/>
</dbReference>
<dbReference type="InterPro" id="IPR004345">
    <property type="entry name" value="TB2_DP1_HVA22"/>
</dbReference>
<dbReference type="PANTHER" id="PTHR12300">
    <property type="entry name" value="HVA22-LIKE PROTEINS"/>
    <property type="match status" value="1"/>
</dbReference>
<dbReference type="PANTHER" id="PTHR12300:SF36">
    <property type="entry name" value="RECEPTOR EXPRESSION-ENHANCING PROTEIN 4"/>
    <property type="match status" value="1"/>
</dbReference>
<dbReference type="Pfam" id="PF03134">
    <property type="entry name" value="TB2_DP1_HVA22"/>
    <property type="match status" value="1"/>
</dbReference>
<organism>
    <name type="scientific">Rattus norvegicus</name>
    <name type="common">Rat</name>
    <dbReference type="NCBI Taxonomy" id="10116"/>
    <lineage>
        <taxon>Eukaryota</taxon>
        <taxon>Metazoa</taxon>
        <taxon>Chordata</taxon>
        <taxon>Craniata</taxon>
        <taxon>Vertebrata</taxon>
        <taxon>Euteleostomi</taxon>
        <taxon>Mammalia</taxon>
        <taxon>Eutheria</taxon>
        <taxon>Euarchontoglires</taxon>
        <taxon>Glires</taxon>
        <taxon>Rodentia</taxon>
        <taxon>Myomorpha</taxon>
        <taxon>Muroidea</taxon>
        <taxon>Muridae</taxon>
        <taxon>Murinae</taxon>
        <taxon>Rattus</taxon>
    </lineage>
</organism>
<sequence>MVSWMICRLVVLIFGMLYPAYASYKAVKSKNIREYVRWMMYWIVFAIFMAAETFTDIFISWFPFYYEIKMAFVLWLLSPYTKGASLLYRKFVHPSLSRHEKEIDACIVQAKERSYETMLSFGKRSLNMAASAAVQAATKSQGALAGRLRSFSMQDLRSIPDTSAPTYQDPLYLEDQAPRRRPPIGYRPGGLQDSDTEDECWSDNEIAPQPPVRPREKPLSRSQSLRVVKRKPLVREGTSRSLKVRTRKKTIPSDLDS</sequence>
<accession>Q4QQW1</accession>
<name>REEP4_RAT</name>
<protein>
    <recommendedName>
        <fullName>Receptor expression-enhancing protein 4</fullName>
    </recommendedName>
</protein>
<feature type="chain" id="PRO_0000101833" description="Receptor expression-enhancing protein 4">
    <location>
        <begin position="1"/>
        <end position="257"/>
    </location>
</feature>
<feature type="transmembrane region" description="Helical" evidence="3">
    <location>
        <begin position="1"/>
        <end position="21"/>
    </location>
</feature>
<feature type="transmembrane region" description="Helical" evidence="3">
    <location>
        <begin position="42"/>
        <end position="62"/>
    </location>
</feature>
<feature type="region of interest" description="Disordered" evidence="4">
    <location>
        <begin position="159"/>
        <end position="257"/>
    </location>
</feature>
<feature type="modified residue" description="Phosphoserine" evidence="6">
    <location>
        <position position="152"/>
    </location>
</feature>
<feature type="modified residue" description="Phosphoserine" evidence="2">
    <location>
        <position position="194"/>
    </location>
</feature>
<feature type="modified residue" description="Phosphothreonine" evidence="2">
    <location>
        <position position="196"/>
    </location>
</feature>
<feature type="modified residue" description="Phosphoserine" evidence="2">
    <location>
        <position position="202"/>
    </location>
</feature>
<feature type="modified residue" description="Phosphothreonine" evidence="2">
    <location>
        <position position="250"/>
    </location>
</feature>
<feature type="modified residue" description="Phosphoserine" evidence="2">
    <location>
        <position position="253"/>
    </location>
</feature>
<evidence type="ECO:0000250" key="1"/>
<evidence type="ECO:0000250" key="2">
    <source>
        <dbReference type="UniProtKB" id="Q9H6H4"/>
    </source>
</evidence>
<evidence type="ECO:0000255" key="3"/>
<evidence type="ECO:0000256" key="4">
    <source>
        <dbReference type="SAM" id="MobiDB-lite"/>
    </source>
</evidence>
<evidence type="ECO:0000305" key="5"/>
<evidence type="ECO:0007744" key="6">
    <source>
    </source>
</evidence>
<gene>
    <name type="primary">Reep4</name>
</gene>
<keyword id="KW-0131">Cell cycle</keyword>
<keyword id="KW-0132">Cell division</keyword>
<keyword id="KW-0256">Endoplasmic reticulum</keyword>
<keyword id="KW-0472">Membrane</keyword>
<keyword id="KW-0493">Microtubule</keyword>
<keyword id="KW-0498">Mitosis</keyword>
<keyword id="KW-0597">Phosphoprotein</keyword>
<keyword id="KW-1185">Reference proteome</keyword>
<keyword id="KW-0812">Transmembrane</keyword>
<keyword id="KW-1133">Transmembrane helix</keyword>